<name>RS9_SHIF8</name>
<feature type="chain" id="PRO_1000051330" description="Small ribosomal subunit protein uS9">
    <location>
        <begin position="1"/>
        <end position="130"/>
    </location>
</feature>
<protein>
    <recommendedName>
        <fullName evidence="1">Small ribosomal subunit protein uS9</fullName>
    </recommendedName>
    <alternativeName>
        <fullName evidence="2">30S ribosomal protein S9</fullName>
    </alternativeName>
</protein>
<comment type="similarity">
    <text evidence="1">Belongs to the universal ribosomal protein uS9 family.</text>
</comment>
<reference key="1">
    <citation type="journal article" date="2006" name="BMC Genomics">
        <title>Complete genome sequence of Shigella flexneri 5b and comparison with Shigella flexneri 2a.</title>
        <authorList>
            <person name="Nie H."/>
            <person name="Yang F."/>
            <person name="Zhang X."/>
            <person name="Yang J."/>
            <person name="Chen L."/>
            <person name="Wang J."/>
            <person name="Xiong Z."/>
            <person name="Peng J."/>
            <person name="Sun L."/>
            <person name="Dong J."/>
            <person name="Xue Y."/>
            <person name="Xu X."/>
            <person name="Chen S."/>
            <person name="Yao Z."/>
            <person name="Shen Y."/>
            <person name="Jin Q."/>
        </authorList>
    </citation>
    <scope>NUCLEOTIDE SEQUENCE [LARGE SCALE GENOMIC DNA]</scope>
    <source>
        <strain>8401</strain>
    </source>
</reference>
<keyword id="KW-0687">Ribonucleoprotein</keyword>
<keyword id="KW-0689">Ribosomal protein</keyword>
<proteinExistence type="inferred from homology"/>
<evidence type="ECO:0000255" key="1">
    <source>
        <dbReference type="HAMAP-Rule" id="MF_00532"/>
    </source>
</evidence>
<evidence type="ECO:0000305" key="2"/>
<sequence length="130" mass="14856">MAENQYYGTGRRKSSAARVFIKPGNGKIVINQRSLEQYFGRETARMVVRQPLELVDMVEKLDLYITVKGGGISGQAGAIRHGITRALMEYDESLRSELRKAGFVTRDARQVERKKVGLRKARRRPQFSKR</sequence>
<organism>
    <name type="scientific">Shigella flexneri serotype 5b (strain 8401)</name>
    <dbReference type="NCBI Taxonomy" id="373384"/>
    <lineage>
        <taxon>Bacteria</taxon>
        <taxon>Pseudomonadati</taxon>
        <taxon>Pseudomonadota</taxon>
        <taxon>Gammaproteobacteria</taxon>
        <taxon>Enterobacterales</taxon>
        <taxon>Enterobacteriaceae</taxon>
        <taxon>Shigella</taxon>
    </lineage>
</organism>
<dbReference type="EMBL" id="CP000266">
    <property type="protein sequence ID" value="ABF05307.1"/>
    <property type="molecule type" value="Genomic_DNA"/>
</dbReference>
<dbReference type="RefSeq" id="WP_000829818.1">
    <property type="nucleotide sequence ID" value="NC_008258.1"/>
</dbReference>
<dbReference type="SMR" id="Q0T058"/>
<dbReference type="GeneID" id="98390344"/>
<dbReference type="KEGG" id="sfv:SFV_3257"/>
<dbReference type="HOGENOM" id="CLU_046483_2_1_6"/>
<dbReference type="Proteomes" id="UP000000659">
    <property type="component" value="Chromosome"/>
</dbReference>
<dbReference type="GO" id="GO:0022627">
    <property type="term" value="C:cytosolic small ribosomal subunit"/>
    <property type="evidence" value="ECO:0007669"/>
    <property type="project" value="TreeGrafter"/>
</dbReference>
<dbReference type="GO" id="GO:0003723">
    <property type="term" value="F:RNA binding"/>
    <property type="evidence" value="ECO:0007669"/>
    <property type="project" value="TreeGrafter"/>
</dbReference>
<dbReference type="GO" id="GO:0003735">
    <property type="term" value="F:structural constituent of ribosome"/>
    <property type="evidence" value="ECO:0007669"/>
    <property type="project" value="InterPro"/>
</dbReference>
<dbReference type="GO" id="GO:0006412">
    <property type="term" value="P:translation"/>
    <property type="evidence" value="ECO:0007669"/>
    <property type="project" value="UniProtKB-UniRule"/>
</dbReference>
<dbReference type="FunFam" id="3.30.230.10:FF:000001">
    <property type="entry name" value="30S ribosomal protein S9"/>
    <property type="match status" value="1"/>
</dbReference>
<dbReference type="Gene3D" id="3.30.230.10">
    <property type="match status" value="1"/>
</dbReference>
<dbReference type="HAMAP" id="MF_00532_B">
    <property type="entry name" value="Ribosomal_uS9_B"/>
    <property type="match status" value="1"/>
</dbReference>
<dbReference type="InterPro" id="IPR020568">
    <property type="entry name" value="Ribosomal_Su5_D2-typ_SF"/>
</dbReference>
<dbReference type="InterPro" id="IPR000754">
    <property type="entry name" value="Ribosomal_uS9"/>
</dbReference>
<dbReference type="InterPro" id="IPR023035">
    <property type="entry name" value="Ribosomal_uS9_bac/plastid"/>
</dbReference>
<dbReference type="InterPro" id="IPR020574">
    <property type="entry name" value="Ribosomal_uS9_CS"/>
</dbReference>
<dbReference type="InterPro" id="IPR014721">
    <property type="entry name" value="Ribsml_uS5_D2-typ_fold_subgr"/>
</dbReference>
<dbReference type="NCBIfam" id="NF001099">
    <property type="entry name" value="PRK00132.1"/>
    <property type="match status" value="1"/>
</dbReference>
<dbReference type="PANTHER" id="PTHR21569">
    <property type="entry name" value="RIBOSOMAL PROTEIN S9"/>
    <property type="match status" value="1"/>
</dbReference>
<dbReference type="PANTHER" id="PTHR21569:SF1">
    <property type="entry name" value="SMALL RIBOSOMAL SUBUNIT PROTEIN US9M"/>
    <property type="match status" value="1"/>
</dbReference>
<dbReference type="Pfam" id="PF00380">
    <property type="entry name" value="Ribosomal_S9"/>
    <property type="match status" value="1"/>
</dbReference>
<dbReference type="SUPFAM" id="SSF54211">
    <property type="entry name" value="Ribosomal protein S5 domain 2-like"/>
    <property type="match status" value="1"/>
</dbReference>
<dbReference type="PROSITE" id="PS00360">
    <property type="entry name" value="RIBOSOMAL_S9"/>
    <property type="match status" value="1"/>
</dbReference>
<gene>
    <name evidence="1" type="primary">rpsI</name>
    <name type="ordered locus">SFV_3257</name>
</gene>
<accession>Q0T058</accession>